<organism>
    <name type="scientific">Bos taurus</name>
    <name type="common">Bovine</name>
    <dbReference type="NCBI Taxonomy" id="9913"/>
    <lineage>
        <taxon>Eukaryota</taxon>
        <taxon>Metazoa</taxon>
        <taxon>Chordata</taxon>
        <taxon>Craniata</taxon>
        <taxon>Vertebrata</taxon>
        <taxon>Euteleostomi</taxon>
        <taxon>Mammalia</taxon>
        <taxon>Eutheria</taxon>
        <taxon>Laurasiatheria</taxon>
        <taxon>Artiodactyla</taxon>
        <taxon>Ruminantia</taxon>
        <taxon>Pecora</taxon>
        <taxon>Bovidae</taxon>
        <taxon>Bovinae</taxon>
        <taxon>Bos</taxon>
    </lineage>
</organism>
<name>GADL1_BOVIN</name>
<accession>A6QM00</accession>
<feature type="chain" id="PRO_0000312223" description="Acidic amino acid decarboxylase GADL1">
    <location>
        <begin position="1"/>
        <end position="521"/>
    </location>
</feature>
<feature type="region of interest" description="Disordered" evidence="2">
    <location>
        <begin position="1"/>
        <end position="20"/>
    </location>
</feature>
<feature type="compositionally biased region" description="Basic and acidic residues" evidence="2">
    <location>
        <begin position="1"/>
        <end position="12"/>
    </location>
</feature>
<feature type="modified residue" description="N6-(pyridoxal phosphate)lysine" evidence="1">
    <location>
        <position position="333"/>
    </location>
</feature>
<reference key="1">
    <citation type="submission" date="2007-06" db="EMBL/GenBank/DDBJ databases">
        <authorList>
            <consortium name="NIH - Mammalian Gene Collection (MGC) project"/>
        </authorList>
    </citation>
    <scope>NUCLEOTIDE SEQUENCE [LARGE SCALE MRNA]</scope>
    <source>
        <strain>Hereford</strain>
        <tissue>Fetal cerebellum</tissue>
    </source>
</reference>
<reference key="2">
    <citation type="journal article" date="2012" name="J. Biol. Chem.">
        <title>Role of glutamate decarboxylase-like protein 1 (GADL1) in taurine biosynthesis.</title>
        <authorList>
            <person name="Liu P."/>
            <person name="Ge X."/>
            <person name="Ding H."/>
            <person name="Jiang H."/>
            <person name="Christensen B.M."/>
            <person name="Li J."/>
        </authorList>
    </citation>
    <scope>TISSUE SPECIFICITY</scope>
</reference>
<evidence type="ECO:0000250" key="1">
    <source>
        <dbReference type="UniProtKB" id="Q80WP8"/>
    </source>
</evidence>
<evidence type="ECO:0000256" key="2">
    <source>
        <dbReference type="SAM" id="MobiDB-lite"/>
    </source>
</evidence>
<evidence type="ECO:0000269" key="3">
    <source>
    </source>
</evidence>
<evidence type="ECO:0000305" key="4"/>
<dbReference type="EC" id="4.1.1.11" evidence="1"/>
<dbReference type="EC" id="4.1.1.29" evidence="1"/>
<dbReference type="EMBL" id="BC148146">
    <property type="protein sequence ID" value="AAI48147.1"/>
    <property type="status" value="ALT_INIT"/>
    <property type="molecule type" value="mRNA"/>
</dbReference>
<dbReference type="RefSeq" id="NP_001095751.2">
    <property type="nucleotide sequence ID" value="NM_001102281.2"/>
</dbReference>
<dbReference type="RefSeq" id="XP_010815825.1">
    <property type="nucleotide sequence ID" value="XM_010817523.2"/>
</dbReference>
<dbReference type="SMR" id="A6QM00"/>
<dbReference type="FunCoup" id="A6QM00">
    <property type="interactions" value="6"/>
</dbReference>
<dbReference type="STRING" id="9913.ENSBTAP00000009385"/>
<dbReference type="PaxDb" id="9913-ENSBTAP00000009385"/>
<dbReference type="Ensembl" id="ENSBTAT00000009385.5">
    <property type="protein sequence ID" value="ENSBTAP00000009385.5"/>
    <property type="gene ID" value="ENSBTAG00000007131.6"/>
</dbReference>
<dbReference type="GeneID" id="614548"/>
<dbReference type="KEGG" id="bta:614548"/>
<dbReference type="CTD" id="339896"/>
<dbReference type="VEuPathDB" id="HostDB:ENSBTAG00000007131"/>
<dbReference type="VGNC" id="VGNC:29210">
    <property type="gene designation" value="GADL1"/>
</dbReference>
<dbReference type="eggNOG" id="KOG0629">
    <property type="taxonomic scope" value="Eukaryota"/>
</dbReference>
<dbReference type="GeneTree" id="ENSGT00940000158391"/>
<dbReference type="InParanoid" id="A6QM00"/>
<dbReference type="OMA" id="NWQPLMV"/>
<dbReference type="OrthoDB" id="392571at2759"/>
<dbReference type="Reactome" id="R-BTA-1614558">
    <property type="pathway name" value="Degradation of cysteine and homocysteine"/>
</dbReference>
<dbReference type="Reactome" id="R-BTA-8963693">
    <property type="pathway name" value="Aspartate and asparagine metabolism"/>
</dbReference>
<dbReference type="Proteomes" id="UP000009136">
    <property type="component" value="Chromosome 22"/>
</dbReference>
<dbReference type="Bgee" id="ENSBTAG00000007131">
    <property type="expression patterns" value="Expressed in infraspinatus muscle and 64 other cell types or tissues"/>
</dbReference>
<dbReference type="GO" id="GO:0005737">
    <property type="term" value="C:cytoplasm"/>
    <property type="evidence" value="ECO:0000318"/>
    <property type="project" value="GO_Central"/>
</dbReference>
<dbReference type="GO" id="GO:0004068">
    <property type="term" value="F:aspartate 1-decarboxylase activity"/>
    <property type="evidence" value="ECO:0007669"/>
    <property type="project" value="UniProtKB-EC"/>
</dbReference>
<dbReference type="GO" id="GO:0016831">
    <property type="term" value="F:carboxy-lyase activity"/>
    <property type="evidence" value="ECO:0000318"/>
    <property type="project" value="GO_Central"/>
</dbReference>
<dbReference type="GO" id="GO:0030170">
    <property type="term" value="F:pyridoxal phosphate binding"/>
    <property type="evidence" value="ECO:0007669"/>
    <property type="project" value="InterPro"/>
</dbReference>
<dbReference type="GO" id="GO:0004782">
    <property type="term" value="F:sulfinoalanine decarboxylase activity"/>
    <property type="evidence" value="ECO:0007669"/>
    <property type="project" value="UniProtKB-EC"/>
</dbReference>
<dbReference type="GO" id="GO:0019752">
    <property type="term" value="P:carboxylic acid metabolic process"/>
    <property type="evidence" value="ECO:0007669"/>
    <property type="project" value="InterPro"/>
</dbReference>
<dbReference type="CDD" id="cd06450">
    <property type="entry name" value="DOPA_deC_like"/>
    <property type="match status" value="1"/>
</dbReference>
<dbReference type="FunFam" id="3.40.640.10:FF:000016">
    <property type="entry name" value="Glutamate decarboxylase like 1"/>
    <property type="match status" value="1"/>
</dbReference>
<dbReference type="Gene3D" id="3.90.1150.170">
    <property type="match status" value="1"/>
</dbReference>
<dbReference type="Gene3D" id="3.40.640.10">
    <property type="entry name" value="Type I PLP-dependent aspartate aminotransferase-like (Major domain)"/>
    <property type="match status" value="1"/>
</dbReference>
<dbReference type="InterPro" id="IPR002129">
    <property type="entry name" value="PyrdxlP-dep_de-COase"/>
</dbReference>
<dbReference type="InterPro" id="IPR015424">
    <property type="entry name" value="PyrdxlP-dep_Trfase"/>
</dbReference>
<dbReference type="InterPro" id="IPR015421">
    <property type="entry name" value="PyrdxlP-dep_Trfase_major"/>
</dbReference>
<dbReference type="InterPro" id="IPR021115">
    <property type="entry name" value="Pyridoxal-P_BS"/>
</dbReference>
<dbReference type="PANTHER" id="PTHR45677:SF1">
    <property type="entry name" value="ACIDIC AMINO ACID DECARBOXYLASE GADL1"/>
    <property type="match status" value="1"/>
</dbReference>
<dbReference type="PANTHER" id="PTHR45677">
    <property type="entry name" value="GLUTAMATE DECARBOXYLASE-RELATED"/>
    <property type="match status" value="1"/>
</dbReference>
<dbReference type="Pfam" id="PF00282">
    <property type="entry name" value="Pyridoxal_deC"/>
    <property type="match status" value="1"/>
</dbReference>
<dbReference type="SUPFAM" id="SSF53383">
    <property type="entry name" value="PLP-dependent transferases"/>
    <property type="match status" value="1"/>
</dbReference>
<dbReference type="PROSITE" id="PS00392">
    <property type="entry name" value="DDC_GAD_HDC_YDC"/>
    <property type="match status" value="1"/>
</dbReference>
<gene>
    <name type="primary">GADL1</name>
</gene>
<sequence length="521" mass="59380">MSLLPDRERAPDGDISPQEMVPSRKNVVLVDGVILNGPATDVKAGEKFVEDACRLIMEEVVLKATDINEKVCEWRPPEELKRLLDLELRDAGEPHHRLLQRCQDVIRYSVKTNHPRFFNQLYAGLDYYSLVARFMTEALNPSVYTYEVSPVFLLVEEAVLKKMIEFIGWKEGDGIFNPGGSVSNMYAMNLARYKYCPDIKEKGLSGLPRLILFTSAECHYSMKKSASFLGIGTENVCFVETDGRGKMIPEELEKRVQEAKKEGAAPFLVCATSGTTVLGAFDPLDEIADICERHGLWLHVDASWGGSALMSRKHRRLLQGIHRADSVAWNPHKMLMAGIQCCAFLVKDKSDLLKRCYSANASYLFQQDKFYDVSYDTGDKSIQCSRRPDAFKFWLAWKALGTLGLEERVNRALALSRYLVEEIKKREGFKLLMEPEYANICFWYIPPSLRQMEEGPEFWAKLHLVAPAIKERMMKKGSLMLGYQPHQGKVNFFRQVVISPQVSREDMDFLLDEIDLLGKDM</sequence>
<keyword id="KW-0210">Decarboxylase</keyword>
<keyword id="KW-0456">Lyase</keyword>
<keyword id="KW-0663">Pyridoxal phosphate</keyword>
<keyword id="KW-1185">Reference proteome</keyword>
<proteinExistence type="evidence at transcript level"/>
<comment type="function">
    <text evidence="1">Catalyzes the decarboxylation of L-aspartate, 3-sulfino-L-alanine (cysteine sulfinic acid), and L-cysteate to beta-alanine, hypotaurine and taurine, respectively. The preferred substrate is L-aspartate. Does not exhibit any decarboxylation activity toward glutamate.</text>
</comment>
<comment type="catalytic activity">
    <reaction evidence="1">
        <text>L-aspartate + H(+) = beta-alanine + CO2</text>
        <dbReference type="Rhea" id="RHEA:19497"/>
        <dbReference type="ChEBI" id="CHEBI:15378"/>
        <dbReference type="ChEBI" id="CHEBI:16526"/>
        <dbReference type="ChEBI" id="CHEBI:29991"/>
        <dbReference type="ChEBI" id="CHEBI:57966"/>
        <dbReference type="EC" id="4.1.1.11"/>
    </reaction>
</comment>
<comment type="catalytic activity">
    <reaction evidence="1">
        <text>3-sulfino-L-alanine + H(+) = hypotaurine + CO2</text>
        <dbReference type="Rhea" id="RHEA:16877"/>
        <dbReference type="ChEBI" id="CHEBI:15378"/>
        <dbReference type="ChEBI" id="CHEBI:16526"/>
        <dbReference type="ChEBI" id="CHEBI:57853"/>
        <dbReference type="ChEBI" id="CHEBI:61085"/>
        <dbReference type="EC" id="4.1.1.29"/>
    </reaction>
</comment>
<comment type="catalytic activity">
    <reaction evidence="1">
        <text>L-cysteate + H(+) = taurine + CO2</text>
        <dbReference type="Rhea" id="RHEA:25221"/>
        <dbReference type="ChEBI" id="CHEBI:15378"/>
        <dbReference type="ChEBI" id="CHEBI:16526"/>
        <dbReference type="ChEBI" id="CHEBI:58090"/>
        <dbReference type="ChEBI" id="CHEBI:507393"/>
        <dbReference type="EC" id="4.1.1.29"/>
    </reaction>
</comment>
<comment type="cofactor">
    <cofactor evidence="1">
        <name>pyridoxal 5'-phosphate</name>
        <dbReference type="ChEBI" id="CHEBI:597326"/>
    </cofactor>
</comment>
<comment type="subunit">
    <text evidence="1">Homodimer.</text>
</comment>
<comment type="tissue specificity">
    <text evidence="3">Expressed at highest levels in skeletal muscles. Also detected heart, spleen and rumen.</text>
</comment>
<comment type="similarity">
    <text evidence="4">Belongs to the group II decarboxylase family.</text>
</comment>
<comment type="sequence caution" evidence="4">
    <conflict type="erroneous initiation">
        <sequence resource="EMBL-CDS" id="AAI48147"/>
    </conflict>
</comment>
<protein>
    <recommendedName>
        <fullName>Acidic amino acid decarboxylase GADL1</fullName>
    </recommendedName>
    <alternativeName>
        <fullName>Aspartate 1-decarboxylase</fullName>
        <shortName>ADC</shortName>
        <ecNumber evidence="1">4.1.1.11</ecNumber>
    </alternativeName>
    <alternativeName>
        <fullName>Cysteine sulfinic acid decarboxylase</fullName>
        <shortName>CSADC</shortName>
        <ecNumber evidence="1">4.1.1.29</ecNumber>
    </alternativeName>
    <alternativeName>
        <fullName>Glutamate decarboxylase-like protein 1</fullName>
    </alternativeName>
</protein>